<dbReference type="EMBL" id="AAFI02000043">
    <property type="protein sequence ID" value="EAL66479.1"/>
    <property type="molecule type" value="Genomic_DNA"/>
</dbReference>
<dbReference type="RefSeq" id="XP_640451.1">
    <property type="nucleotide sequence ID" value="XM_635359.1"/>
</dbReference>
<dbReference type="SMR" id="Q54TD8"/>
<dbReference type="FunCoup" id="Q54TD8">
    <property type="interactions" value="734"/>
</dbReference>
<dbReference type="STRING" id="44689.Q54TD8"/>
<dbReference type="PaxDb" id="44689-DDB0237686"/>
<dbReference type="EnsemblProtists" id="EAL66479">
    <property type="protein sequence ID" value="EAL66479"/>
    <property type="gene ID" value="DDB_G0281839"/>
</dbReference>
<dbReference type="GeneID" id="8623264"/>
<dbReference type="KEGG" id="ddi:DDB_G0281839"/>
<dbReference type="dictyBase" id="DDB_G0281839"/>
<dbReference type="VEuPathDB" id="AmoebaDB:DDB_G0281839"/>
<dbReference type="eggNOG" id="KOG0650">
    <property type="taxonomic scope" value="Eukaryota"/>
</dbReference>
<dbReference type="HOGENOM" id="CLU_011390_1_0_1"/>
<dbReference type="InParanoid" id="Q54TD8"/>
<dbReference type="OMA" id="MRPAKGE"/>
<dbReference type="PhylomeDB" id="Q54TD8"/>
<dbReference type="Reactome" id="R-DDI-6791226">
    <property type="pathway name" value="Major pathway of rRNA processing in the nucleolus and cytosol"/>
</dbReference>
<dbReference type="PRO" id="PR:Q54TD8"/>
<dbReference type="Proteomes" id="UP000002195">
    <property type="component" value="Chromosome 3"/>
</dbReference>
<dbReference type="GO" id="GO:0005730">
    <property type="term" value="C:nucleolus"/>
    <property type="evidence" value="ECO:0000250"/>
    <property type="project" value="dictyBase"/>
</dbReference>
<dbReference type="GO" id="GO:0005654">
    <property type="term" value="C:nucleoplasm"/>
    <property type="evidence" value="ECO:0007669"/>
    <property type="project" value="UniProtKB-SubCell"/>
</dbReference>
<dbReference type="GO" id="GO:0070545">
    <property type="term" value="C:PeBoW complex"/>
    <property type="evidence" value="ECO:0000318"/>
    <property type="project" value="GO_Central"/>
</dbReference>
<dbReference type="GO" id="GO:0030687">
    <property type="term" value="C:preribosome, large subunit precursor"/>
    <property type="evidence" value="ECO:0000318"/>
    <property type="project" value="GO_Central"/>
</dbReference>
<dbReference type="GO" id="GO:0043021">
    <property type="term" value="F:ribonucleoprotein complex binding"/>
    <property type="evidence" value="ECO:0000250"/>
    <property type="project" value="dictyBase"/>
</dbReference>
<dbReference type="GO" id="GO:0000466">
    <property type="term" value="P:maturation of 5.8S rRNA from tricistronic rRNA transcript (SSU-rRNA, 5.8S rRNA, LSU-rRNA)"/>
    <property type="evidence" value="ECO:0007669"/>
    <property type="project" value="UniProtKB-UniRule"/>
</dbReference>
<dbReference type="GO" id="GO:0000463">
    <property type="term" value="P:maturation of LSU-rRNA from tricistronic rRNA transcript (SSU-rRNA, 5.8S rRNA, LSU-rRNA)"/>
    <property type="evidence" value="ECO:0000318"/>
    <property type="project" value="GO_Central"/>
</dbReference>
<dbReference type="GO" id="GO:0042273">
    <property type="term" value="P:ribosomal large subunit biogenesis"/>
    <property type="evidence" value="ECO:0000250"/>
    <property type="project" value="dictyBase"/>
</dbReference>
<dbReference type="GO" id="GO:0006364">
    <property type="term" value="P:rRNA processing"/>
    <property type="evidence" value="ECO:0000250"/>
    <property type="project" value="dictyBase"/>
</dbReference>
<dbReference type="FunFam" id="2.130.10.10:FF:000061">
    <property type="entry name" value="Ribosome biogenesis protein BOP1 homolog"/>
    <property type="match status" value="1"/>
</dbReference>
<dbReference type="Gene3D" id="2.130.10.10">
    <property type="entry name" value="YVTN repeat-like/Quinoprotein amine dehydrogenase"/>
    <property type="match status" value="1"/>
</dbReference>
<dbReference type="HAMAP" id="MF_03027">
    <property type="entry name" value="BOP1"/>
    <property type="match status" value="1"/>
</dbReference>
<dbReference type="InterPro" id="IPR028598">
    <property type="entry name" value="BOP1/Erb1"/>
</dbReference>
<dbReference type="InterPro" id="IPR012953">
    <property type="entry name" value="BOP1_N_dom"/>
</dbReference>
<dbReference type="InterPro" id="IPR015943">
    <property type="entry name" value="WD40/YVTN_repeat-like_dom_sf"/>
</dbReference>
<dbReference type="InterPro" id="IPR019775">
    <property type="entry name" value="WD40_repeat_CS"/>
</dbReference>
<dbReference type="InterPro" id="IPR036322">
    <property type="entry name" value="WD40_repeat_dom_sf"/>
</dbReference>
<dbReference type="InterPro" id="IPR001680">
    <property type="entry name" value="WD40_rpt"/>
</dbReference>
<dbReference type="PANTHER" id="PTHR17605:SF0">
    <property type="entry name" value="RIBOSOME BIOGENESIS PROTEIN BOP1"/>
    <property type="match status" value="1"/>
</dbReference>
<dbReference type="PANTHER" id="PTHR17605">
    <property type="entry name" value="RIBOSOME BIOGENESIS PROTEIN BOP1 BLOCK OF PROLIFERATION 1 PROTEIN"/>
    <property type="match status" value="1"/>
</dbReference>
<dbReference type="Pfam" id="PF08145">
    <property type="entry name" value="BOP1NT"/>
    <property type="match status" value="1"/>
</dbReference>
<dbReference type="Pfam" id="PF00400">
    <property type="entry name" value="WD40"/>
    <property type="match status" value="3"/>
</dbReference>
<dbReference type="SMART" id="SM01035">
    <property type="entry name" value="BOP1NT"/>
    <property type="match status" value="1"/>
</dbReference>
<dbReference type="SMART" id="SM00320">
    <property type="entry name" value="WD40"/>
    <property type="match status" value="7"/>
</dbReference>
<dbReference type="SUPFAM" id="SSF50978">
    <property type="entry name" value="WD40 repeat-like"/>
    <property type="match status" value="1"/>
</dbReference>
<dbReference type="PROSITE" id="PS00678">
    <property type="entry name" value="WD_REPEATS_1"/>
    <property type="match status" value="1"/>
</dbReference>
<dbReference type="PROSITE" id="PS50082">
    <property type="entry name" value="WD_REPEATS_2"/>
    <property type="match status" value="1"/>
</dbReference>
<dbReference type="PROSITE" id="PS50294">
    <property type="entry name" value="WD_REPEATS_REGION"/>
    <property type="match status" value="2"/>
</dbReference>
<organism>
    <name type="scientific">Dictyostelium discoideum</name>
    <name type="common">Social amoeba</name>
    <dbReference type="NCBI Taxonomy" id="44689"/>
    <lineage>
        <taxon>Eukaryota</taxon>
        <taxon>Amoebozoa</taxon>
        <taxon>Evosea</taxon>
        <taxon>Eumycetozoa</taxon>
        <taxon>Dictyostelia</taxon>
        <taxon>Dictyosteliales</taxon>
        <taxon>Dictyosteliaceae</taxon>
        <taxon>Dictyostelium</taxon>
    </lineage>
</organism>
<gene>
    <name type="ORF">DDB_G0281839</name>
</gene>
<accession>Q54TD8</accession>
<evidence type="ECO:0000255" key="1">
    <source>
        <dbReference type="HAMAP-Rule" id="MF_03027"/>
    </source>
</evidence>
<evidence type="ECO:0000256" key="2">
    <source>
        <dbReference type="SAM" id="MobiDB-lite"/>
    </source>
</evidence>
<reference key="1">
    <citation type="journal article" date="2005" name="Nature">
        <title>The genome of the social amoeba Dictyostelium discoideum.</title>
        <authorList>
            <person name="Eichinger L."/>
            <person name="Pachebat J.A."/>
            <person name="Gloeckner G."/>
            <person name="Rajandream M.A."/>
            <person name="Sucgang R."/>
            <person name="Berriman M."/>
            <person name="Song J."/>
            <person name="Olsen R."/>
            <person name="Szafranski K."/>
            <person name="Xu Q."/>
            <person name="Tunggal B."/>
            <person name="Kummerfeld S."/>
            <person name="Madera M."/>
            <person name="Konfortov B.A."/>
            <person name="Rivero F."/>
            <person name="Bankier A.T."/>
            <person name="Lehmann R."/>
            <person name="Hamlin N."/>
            <person name="Davies R."/>
            <person name="Gaudet P."/>
            <person name="Fey P."/>
            <person name="Pilcher K."/>
            <person name="Chen G."/>
            <person name="Saunders D."/>
            <person name="Sodergren E.J."/>
            <person name="Davis P."/>
            <person name="Kerhornou A."/>
            <person name="Nie X."/>
            <person name="Hall N."/>
            <person name="Anjard C."/>
            <person name="Hemphill L."/>
            <person name="Bason N."/>
            <person name="Farbrother P."/>
            <person name="Desany B."/>
            <person name="Just E."/>
            <person name="Morio T."/>
            <person name="Rost R."/>
            <person name="Churcher C.M."/>
            <person name="Cooper J."/>
            <person name="Haydock S."/>
            <person name="van Driessche N."/>
            <person name="Cronin A."/>
            <person name="Goodhead I."/>
            <person name="Muzny D.M."/>
            <person name="Mourier T."/>
            <person name="Pain A."/>
            <person name="Lu M."/>
            <person name="Harper D."/>
            <person name="Lindsay R."/>
            <person name="Hauser H."/>
            <person name="James K.D."/>
            <person name="Quiles M."/>
            <person name="Madan Babu M."/>
            <person name="Saito T."/>
            <person name="Buchrieser C."/>
            <person name="Wardroper A."/>
            <person name="Felder M."/>
            <person name="Thangavelu M."/>
            <person name="Johnson D."/>
            <person name="Knights A."/>
            <person name="Loulseged H."/>
            <person name="Mungall K.L."/>
            <person name="Oliver K."/>
            <person name="Price C."/>
            <person name="Quail M.A."/>
            <person name="Urushihara H."/>
            <person name="Hernandez J."/>
            <person name="Rabbinowitsch E."/>
            <person name="Steffen D."/>
            <person name="Sanders M."/>
            <person name="Ma J."/>
            <person name="Kohara Y."/>
            <person name="Sharp S."/>
            <person name="Simmonds M.N."/>
            <person name="Spiegler S."/>
            <person name="Tivey A."/>
            <person name="Sugano S."/>
            <person name="White B."/>
            <person name="Walker D."/>
            <person name="Woodward J.R."/>
            <person name="Winckler T."/>
            <person name="Tanaka Y."/>
            <person name="Shaulsky G."/>
            <person name="Schleicher M."/>
            <person name="Weinstock G.M."/>
            <person name="Rosenthal A."/>
            <person name="Cox E.C."/>
            <person name="Chisholm R.L."/>
            <person name="Gibbs R.A."/>
            <person name="Loomis W.F."/>
            <person name="Platzer M."/>
            <person name="Kay R.R."/>
            <person name="Williams J.G."/>
            <person name="Dear P.H."/>
            <person name="Noegel A.A."/>
            <person name="Barrell B.G."/>
            <person name="Kuspa A."/>
        </authorList>
    </citation>
    <scope>NUCLEOTIDE SEQUENCE [LARGE SCALE GENOMIC DNA]</scope>
    <source>
        <strain>AX4</strain>
    </source>
</reference>
<feature type="chain" id="PRO_0000370408" description="Ribosome biogenesis protein BOP1 homolog">
    <location>
        <begin position="1"/>
        <end position="833"/>
    </location>
</feature>
<feature type="repeat" description="WD 1">
    <location>
        <begin position="331"/>
        <end position="370"/>
    </location>
</feature>
<feature type="repeat" description="WD 2">
    <location>
        <begin position="488"/>
        <end position="527"/>
    </location>
</feature>
<feature type="repeat" description="WD 3">
    <location>
        <begin position="529"/>
        <end position="569"/>
    </location>
</feature>
<feature type="repeat" description="WD 4">
    <location>
        <begin position="618"/>
        <end position="660"/>
    </location>
</feature>
<feature type="repeat" description="WD 5">
    <location>
        <begin position="663"/>
        <end position="701"/>
    </location>
</feature>
<feature type="repeat" description="WD 6">
    <location>
        <begin position="704"/>
        <end position="743"/>
    </location>
</feature>
<feature type="repeat" description="WD 7">
    <location>
        <begin position="747"/>
        <end position="786"/>
    </location>
</feature>
<feature type="repeat" description="WD 8">
    <location>
        <begin position="802"/>
        <end position="833"/>
    </location>
</feature>
<feature type="region of interest" description="Disordered" evidence="2">
    <location>
        <begin position="20"/>
        <end position="202"/>
    </location>
</feature>
<feature type="region of interest" description="Disordered" evidence="2">
    <location>
        <begin position="568"/>
        <end position="592"/>
    </location>
</feature>
<feature type="compositionally biased region" description="Low complexity" evidence="2">
    <location>
        <begin position="36"/>
        <end position="56"/>
    </location>
</feature>
<feature type="compositionally biased region" description="Acidic residues" evidence="2">
    <location>
        <begin position="90"/>
        <end position="111"/>
    </location>
</feature>
<feature type="compositionally biased region" description="Acidic residues" evidence="2">
    <location>
        <begin position="136"/>
        <end position="150"/>
    </location>
</feature>
<feature type="compositionally biased region" description="Low complexity" evidence="2">
    <location>
        <begin position="154"/>
        <end position="170"/>
    </location>
</feature>
<feature type="compositionally biased region" description="Polar residues" evidence="2">
    <location>
        <begin position="182"/>
        <end position="192"/>
    </location>
</feature>
<feature type="compositionally biased region" description="Acidic residues" evidence="2">
    <location>
        <begin position="193"/>
        <end position="202"/>
    </location>
</feature>
<feature type="compositionally biased region" description="Polar residues" evidence="2">
    <location>
        <begin position="582"/>
        <end position="592"/>
    </location>
</feature>
<sequence>MNKSKVTSKKVVAETKVVNNKKSEPIAVSEPKKSVSKPTTTATTTVSKSPVSTITTQILGKRTKTPVVRDEENEDEKLDFGNIDLNNYNSEDDEDYESEEDDEGDDEEDVESQNGSIVYSESEEEEEGGINKALLEAEESLVEYQSEDDSGSISSKSSSSTTTTTTTTKKTNNDEEEVAPNKQWTNDPNQFYDSDDSSEDESLVNRIGNIPLEWYDDYDHIGYDVDGNKIMKTESMKDSIDKYLDQQDPNFWRTVYDKVNDKKVVLSDDDMALLKSIQNKHFIPGYDPYADWYDSGNNHPDSIHPMHNAPVPKRSFFPNGTDEEREIRRLTKAIRMGWIKLNKKGKKGEKDKKDGNFDLWADEGEEKEKTKGIRRIAAPKQKLPGNVESFNPPEEYLLNENELKAWHLMDPRERPHNFIPQKYQSLRQLPIYNKLIKERFERCLDLYLCPRTTRVKQFTKDPTKFLPTLPKPQDLRPFPSHEEIQFLGHKARVRSISISPNGQWLASGSDDCTIKIWEVSSTRCLYSLEVESEVQTVAWNPNPIYNILAVGYSNKIIIITPPLFGTQTEHSPETEKILTKPPTDSSTEQQQNKSVNWYQVTGADKAKLLEKGVRIEIHHPFTVKNLTWHYKGDYFSTTSPEEGTRSVKIHHLSKRATQSPFRKSKTPNQVTRFHPNKPIFFVADQNIIRVYDLMKQELIKKLITGCRYISSIDIHPQGDNVIMGGYDKKVCWFDLDLSVRPYKVLNYHKMAVRKVIYHPTLPLFASCSDDLSIHVFHGMVYDDLLQNALIVPLKILKTHESINDLGVLDIVFHPKQPWIFSSGADSTIRLYTN</sequence>
<comment type="function">
    <text evidence="1">Required for maturation of ribosomal RNAs and formation of the large ribosomal subunit.</text>
</comment>
<comment type="subcellular location">
    <subcellularLocation>
        <location evidence="1">Nucleus</location>
        <location evidence="1">Nucleolus</location>
    </subcellularLocation>
    <subcellularLocation>
        <location evidence="1">Nucleus</location>
        <location evidence="1">Nucleoplasm</location>
    </subcellularLocation>
</comment>
<comment type="similarity">
    <text evidence="1">Belongs to the WD repeat BOP1/ERB1 family.</text>
</comment>
<keyword id="KW-0539">Nucleus</keyword>
<keyword id="KW-1185">Reference proteome</keyword>
<keyword id="KW-0677">Repeat</keyword>
<keyword id="KW-0690">Ribosome biogenesis</keyword>
<keyword id="KW-0698">rRNA processing</keyword>
<keyword id="KW-0853">WD repeat</keyword>
<name>BOP1_DICDI</name>
<proteinExistence type="inferred from homology"/>
<protein>
    <recommendedName>
        <fullName evidence="1">Ribosome biogenesis protein BOP1 homolog</fullName>
    </recommendedName>
</protein>